<organism>
    <name type="scientific">Homo sapiens</name>
    <name type="common">Human</name>
    <dbReference type="NCBI Taxonomy" id="9606"/>
    <lineage>
        <taxon>Eukaryota</taxon>
        <taxon>Metazoa</taxon>
        <taxon>Chordata</taxon>
        <taxon>Craniata</taxon>
        <taxon>Vertebrata</taxon>
        <taxon>Euteleostomi</taxon>
        <taxon>Mammalia</taxon>
        <taxon>Eutheria</taxon>
        <taxon>Euarchontoglires</taxon>
        <taxon>Primates</taxon>
        <taxon>Haplorrhini</taxon>
        <taxon>Catarrhini</taxon>
        <taxon>Hominidae</taxon>
        <taxon>Homo</taxon>
    </lineage>
</organism>
<accession>Q5T0N1</accession>
<accession>C9JIZ9</accession>
<accession>Q5T0M4</accession>
<accession>Q5T0M9</accession>
<accession>Q5T0N0</accession>
<accession>Q69YH9</accession>
<accession>Q8IYZ8</accession>
<accession>Q8N7D5</accession>
<accession>Q8NI30</accession>
<accession>Q8NI31</accession>
<protein>
    <recommendedName>
        <fullName evidence="9">Cilia- and flagella-associated protein 70</fullName>
    </recommendedName>
    <alternativeName>
        <fullName evidence="8">Tetratricopeptide repeat protein 18</fullName>
        <shortName evidence="8">TPR repeat protein 18</shortName>
    </alternativeName>
</protein>
<sequence>MEQVPSAGRLVQITVTEGYDLKGFKGDTPVTFIRAEFNQVVLGDSAKITVSPEGSAKYNFTSSFEFNPEGGITSDDLAHKPVFLTVTEVLPKEKKQKEEKTLILGQAVVDLLPLLEGQSSFQTTVPLHPVQGSPLETPRSSAKQCSLEVKVLVAEPLLTTAQISGGNLLKVTLEAAYSVPESFIPTGPGQNYMVGLQVPSLGEKDYPILFKNGTLKLGGEREPVPRPKKWPIANILAPGANNIPDAFIVGGPYEEEEGELNHPEDSEFRNQAECIKKRIIWDLESRCYLDPSAVVSFQKRIADCRLWPVEITRVPLVTIPKGKAGKTEKTDEEAQLSFHGVAYVNMVPLLYPGVKRIRGAFHVYPYLDSVVHEKTKCLLSLFRDIGHHLIHNNKIGGINSLLSKQAVSKNLKEDKPVKEKDIDGRPRPGDVQAPSIKSQSSDTPLEGEPPLSHNPEGQQYVEAGTYIVLEIQLDKALVPKRMPEELARRVKEMIPPRPPLTRRTGGAQKAMSDYHIQIKNISRAILDEYYRMFGKQVAKLESDMDSETLEEQKCQLSYELNCSGKYFAFKEQLKHAVVKIVRDKYLKTTSFESQEELQTFISELYVFLVDQMHVALNQTMPDDVQGTVATIYTSSEQLQLFAFEAEVNENFEMAAAYYKERLVREPQNLDHWLDYGAFCLLTEDNIKAQECFQKALSLNQSHIHSLLLCGVLAVLLENYEQAEIFFEDATCLEPTNVVAWTLLGLYYEIQNNDIRMEMAFHEASKQLQARMLQAQVTKQKSTGVEDTEERGKRESSLGPWGITNGSATAIKVEAPAGPGAALSILDKFLEESSKLQSDSQEPILTTQTWDPSISQKPSNTFIKEIPTKKEASKCQDSSALLHPGLHYGVSQTTTIFMETIHFLMKVKAVQYVHRVLAHELLCPQGGPSCEYYLVLAQTHILKKNFAKAEEYLQQAAQMDYLNPNVWGLKGHLYFLSGNHSEAKACYERTISFVVDASEMHFIFLRLGLIYLEEKEYEKAKKTYMQACKRSPSCLTWLGLGIACYRLEELTEAEDALSEANALNNYNAEVWAYLALVCLKVGRQLEAEQAYKYMIKLKLKDEALLAEIHTLQETVGFGNPSF</sequence>
<keyword id="KW-0025">Alternative splicing</keyword>
<keyword id="KW-0966">Cell projection</keyword>
<keyword id="KW-0969">Cilium</keyword>
<keyword id="KW-0963">Cytoplasm</keyword>
<keyword id="KW-0206">Cytoskeleton</keyword>
<keyword id="KW-0225">Disease variant</keyword>
<keyword id="KW-0282">Flagellum</keyword>
<keyword id="KW-1267">Proteomics identification</keyword>
<keyword id="KW-1185">Reference proteome</keyword>
<keyword id="KW-0677">Repeat</keyword>
<keyword id="KW-0802">TPR repeat</keyword>
<comment type="function">
    <text evidence="1">Axoneme-binding protein that plays a role in the regulation of ciliary motility and cilium length.</text>
</comment>
<comment type="subcellular location">
    <subcellularLocation>
        <location evidence="3 4">Cell projection</location>
        <location evidence="3 4">Cilium</location>
        <location evidence="3 4">Flagellum</location>
    </subcellularLocation>
    <subcellularLocation>
        <location evidence="3">Cytoplasm</location>
        <location evidence="3">Cytoskeleton</location>
        <location evidence="3">Flagellum basal body</location>
    </subcellularLocation>
    <subcellularLocation>
        <location evidence="1">Cell projection</location>
        <location evidence="1">Cilium</location>
    </subcellularLocation>
    <subcellularLocation>
        <location evidence="1">Cytoplasm</location>
        <location evidence="1">Cytoskeleton</location>
        <location evidence="1">Cilium axoneme</location>
    </subcellularLocation>
    <text evidence="3">Present all along the flagellum, with a marked signal at the base of the flagellum.</text>
</comment>
<comment type="alternative products">
    <event type="alternative splicing"/>
    <isoform>
        <id>Q5T0N1-1</id>
        <name>1</name>
        <sequence type="displayed"/>
    </isoform>
    <isoform>
        <id>Q5T0N1-2</id>
        <name>2</name>
        <sequence type="described" ref="VSP_026291"/>
    </isoform>
    <isoform>
        <id>Q5T0N1-3</id>
        <name>3</name>
        <sequence type="described" ref="VSP_054462 VSP_026289"/>
    </isoform>
    <isoform>
        <id>Q5T0N1-6</id>
        <name>4</name>
        <sequence type="described" ref="VSP_054461 VSP_026291"/>
    </isoform>
    <isoform>
        <id>Q5T0N1-7</id>
        <name>5</name>
        <sequence type="described" ref="VSP_054461"/>
    </isoform>
</comment>
<comment type="tissue specificity">
    <text evidence="3">Expressed in testis.</text>
</comment>
<comment type="domain">
    <text evidence="1">The conserved TPR domains are dispensable for ciliary targeting. The N-terminal half is important for cilary localization and/or binding to the axoneme.</text>
</comment>
<comment type="disease" evidence="3">
    <disease id="DI-05694">
        <name>Spermatogenic failure 41</name>
        <acronym>SPGF41</acronym>
        <description>An autosomal recessive infertility disorder characterized by oligozoospermia, severe asthenozoospermia and flagellar abnormalities such as short, absent, coiled, and irregular-caliber flagella. Some sperm show tapered heads and acrosomal abnormalities.</description>
        <dbReference type="MIM" id="618670"/>
    </disease>
    <text>The disease may be caused by variants affecting the gene represented in this entry.</text>
</comment>
<comment type="similarity">
    <text evidence="8">Belongs to the CFAP70 family.</text>
</comment>
<comment type="sequence caution" evidence="8">
    <conflict type="frameshift">
        <sequence resource="EMBL-CDS" id="AAM20909"/>
    </conflict>
</comment>
<comment type="sequence caution" evidence="8">
    <conflict type="frameshift">
        <sequence resource="EMBL-CDS" id="AAM20910"/>
    </conflict>
</comment>
<comment type="sequence caution" evidence="8">
    <conflict type="erroneous initiation">
        <sequence resource="EMBL-CDS" id="BAC05358"/>
    </conflict>
    <text>Truncated N-terminus.</text>
</comment>
<proteinExistence type="evidence at protein level"/>
<feature type="chain" id="PRO_0000291913" description="Cilia- and flagella-associated protein 70">
    <location>
        <begin position="1"/>
        <end position="1121"/>
    </location>
</feature>
<feature type="repeat" description="TPR 1">
    <location>
        <begin position="635"/>
        <end position="668"/>
    </location>
</feature>
<feature type="repeat" description="TPR 2">
    <location>
        <begin position="669"/>
        <end position="702"/>
    </location>
</feature>
<feature type="repeat" description="TPR 3">
    <location>
        <begin position="704"/>
        <end position="736"/>
    </location>
</feature>
<feature type="repeat" description="TPR 4">
    <location>
        <begin position="929"/>
        <end position="962"/>
    </location>
</feature>
<feature type="repeat" description="TPR 5">
    <location>
        <begin position="963"/>
        <end position="996"/>
    </location>
</feature>
<feature type="repeat" description="TPR 6">
    <location>
        <begin position="1000"/>
        <end position="1033"/>
    </location>
</feature>
<feature type="repeat" description="TPR 7">
    <location>
        <begin position="1035"/>
        <end position="1066"/>
    </location>
</feature>
<feature type="repeat" description="TPR 8">
    <location>
        <begin position="1068"/>
        <end position="1100"/>
    </location>
</feature>
<feature type="region of interest" description="Disordered" evidence="2">
    <location>
        <begin position="410"/>
        <end position="457"/>
    </location>
</feature>
<feature type="region of interest" description="Disordered" evidence="2">
    <location>
        <begin position="778"/>
        <end position="802"/>
    </location>
</feature>
<feature type="region of interest" description="Disordered" evidence="2">
    <location>
        <begin position="836"/>
        <end position="858"/>
    </location>
</feature>
<feature type="compositionally biased region" description="Basic and acidic residues" evidence="2">
    <location>
        <begin position="410"/>
        <end position="428"/>
    </location>
</feature>
<feature type="splice variant" id="VSP_054461" description="In isoform 4 and isoform 5." evidence="7">
    <location>
        <begin position="1"/>
        <end position="896"/>
    </location>
</feature>
<feature type="splice variant" id="VSP_054462" description="In isoform 3." evidence="6">
    <original>GQS</original>
    <variation>VQS</variation>
    <location>
        <begin position="117"/>
        <end position="119"/>
    </location>
</feature>
<feature type="splice variant" id="VSP_026289" description="In isoform 3." evidence="6">
    <location>
        <begin position="120"/>
        <end position="1121"/>
    </location>
</feature>
<feature type="splice variant" id="VSP_026291" description="In isoform 2 and isoform 4." evidence="5 7">
    <location>
        <begin position="1016"/>
        <end position="1045"/>
    </location>
</feature>
<feature type="sequence variant" id="VAR_083155" description="In SPGF41; uncertain significance." evidence="3">
    <original>F</original>
    <variation>I</variation>
    <location>
        <position position="60"/>
    </location>
</feature>
<feature type="sequence variant" id="VAR_032877" description="In dbSNP:rs12256262.">
    <original>W</original>
    <variation>L</variation>
    <location>
        <position position="849"/>
    </location>
</feature>
<feature type="sequence variant" id="VAR_032878" description="In dbSNP:rs4294502.">
    <original>N</original>
    <variation>D</variation>
    <location>
        <position position="944"/>
    </location>
</feature>
<feature type="sequence conflict" description="In Ref. 1; CAH10391." evidence="8" ref="1">
    <original>H</original>
    <variation>Y</variation>
    <location>
        <position position="79"/>
    </location>
</feature>
<feature type="sequence conflict" description="In Ref. 3; AAH32856." evidence="8" ref="3">
    <original>M</original>
    <variation>V</variation>
    <location>
        <position position="511"/>
    </location>
</feature>
<feature type="sequence conflict" description="In Ref. 5; AAM20909/AAM20910." evidence="8" ref="5">
    <original>C</original>
    <variation>R</variation>
    <location>
        <position position="922"/>
    </location>
</feature>
<evidence type="ECO:0000250" key="1">
    <source>
        <dbReference type="UniProtKB" id="D3YVL2"/>
    </source>
</evidence>
<evidence type="ECO:0000256" key="2">
    <source>
        <dbReference type="SAM" id="MobiDB-lite"/>
    </source>
</evidence>
<evidence type="ECO:0000269" key="3">
    <source>
    </source>
</evidence>
<evidence type="ECO:0000269" key="4">
    <source>
    </source>
</evidence>
<evidence type="ECO:0000303" key="5">
    <source>
    </source>
</evidence>
<evidence type="ECO:0000303" key="6">
    <source>
    </source>
</evidence>
<evidence type="ECO:0000303" key="7">
    <source ref="5"/>
</evidence>
<evidence type="ECO:0000305" key="8"/>
<evidence type="ECO:0000312" key="9">
    <source>
        <dbReference type="HGNC" id="HGNC:30726"/>
    </source>
</evidence>
<gene>
    <name evidence="9" type="primary">CFAP70</name>
    <name evidence="9" type="synonym">TTC18</name>
</gene>
<dbReference type="EMBL" id="AL833537">
    <property type="protein sequence ID" value="CAH10391.1"/>
    <property type="status" value="ALT_TERM"/>
    <property type="molecule type" value="mRNA"/>
</dbReference>
<dbReference type="EMBL" id="AC016394">
    <property type="status" value="NOT_ANNOTATED_CDS"/>
    <property type="molecule type" value="Genomic_DNA"/>
</dbReference>
<dbReference type="EMBL" id="AL512656">
    <property type="status" value="NOT_ANNOTATED_CDS"/>
    <property type="molecule type" value="Genomic_DNA"/>
</dbReference>
<dbReference type="EMBL" id="BC032856">
    <property type="protein sequence ID" value="AAH32856.1"/>
    <property type="molecule type" value="mRNA"/>
</dbReference>
<dbReference type="EMBL" id="AK098631">
    <property type="protein sequence ID" value="BAC05358.1"/>
    <property type="status" value="ALT_INIT"/>
    <property type="molecule type" value="mRNA"/>
</dbReference>
<dbReference type="EMBL" id="AF435958">
    <property type="protein sequence ID" value="AAM20909.1"/>
    <property type="status" value="ALT_FRAME"/>
    <property type="molecule type" value="mRNA"/>
</dbReference>
<dbReference type="EMBL" id="AF435959">
    <property type="protein sequence ID" value="AAM20910.1"/>
    <property type="status" value="ALT_FRAME"/>
    <property type="molecule type" value="mRNA"/>
</dbReference>
<dbReference type="CCDS" id="CCDS91264.1">
    <molecule id="Q5T0N1-1"/>
</dbReference>
<dbReference type="RefSeq" id="NP_660153.3">
    <property type="nucleotide sequence ID" value="NM_145170.3"/>
</dbReference>
<dbReference type="RefSeq" id="XP_006717667.1">
    <property type="nucleotide sequence ID" value="XM_006717604.2"/>
</dbReference>
<dbReference type="RefSeq" id="XP_006717668.1">
    <property type="nucleotide sequence ID" value="XM_006717605.2"/>
</dbReference>
<dbReference type="SMR" id="Q5T0N1"/>
<dbReference type="BioGRID" id="125614">
    <property type="interactions" value="4"/>
</dbReference>
<dbReference type="FunCoup" id="Q5T0N1">
    <property type="interactions" value="74"/>
</dbReference>
<dbReference type="STRING" id="9606.ENSP00000310829"/>
<dbReference type="iPTMnet" id="Q5T0N1"/>
<dbReference type="PhosphoSitePlus" id="Q5T0N1"/>
<dbReference type="BioMuta" id="CFAP70"/>
<dbReference type="DMDM" id="294862471"/>
<dbReference type="MassIVE" id="Q5T0N1"/>
<dbReference type="PaxDb" id="9606-ENSP00000310829"/>
<dbReference type="PeptideAtlas" id="Q5T0N1"/>
<dbReference type="ProteomicsDB" id="64180">
    <molecule id="Q5T0N1-1"/>
</dbReference>
<dbReference type="ProteomicsDB" id="64181">
    <molecule id="Q5T0N1-2"/>
</dbReference>
<dbReference type="ProteomicsDB" id="64182">
    <molecule id="Q5T0N1-3"/>
</dbReference>
<dbReference type="Antibodypedia" id="29381">
    <property type="antibodies" value="20 antibodies from 9 providers"/>
</dbReference>
<dbReference type="DNASU" id="118491"/>
<dbReference type="Ensembl" id="ENST00000493787.6">
    <molecule id="Q5T0N1-3"/>
    <property type="protein sequence ID" value="ENSP00000510297.1"/>
    <property type="gene ID" value="ENSG00000156042.19"/>
</dbReference>
<dbReference type="GeneID" id="118491"/>
<dbReference type="UCSC" id="uc009xrc.4">
    <molecule id="Q5T0N1-1"/>
    <property type="organism name" value="human"/>
</dbReference>
<dbReference type="AGR" id="HGNC:30726"/>
<dbReference type="CTD" id="118491"/>
<dbReference type="DisGeNET" id="118491"/>
<dbReference type="GeneCards" id="CFAP70"/>
<dbReference type="HGNC" id="HGNC:30726">
    <property type="gene designation" value="CFAP70"/>
</dbReference>
<dbReference type="MalaCards" id="CFAP70"/>
<dbReference type="MIM" id="618661">
    <property type="type" value="gene"/>
</dbReference>
<dbReference type="MIM" id="618670">
    <property type="type" value="phenotype"/>
</dbReference>
<dbReference type="neXtProt" id="NX_Q5T0N1"/>
<dbReference type="OpenTargets" id="ENSG00000156042"/>
<dbReference type="Orphanet" id="276234">
    <property type="disease" value="Non-syndromic male infertility due to sperm motility disorder"/>
</dbReference>
<dbReference type="PharmGKB" id="PA134881300"/>
<dbReference type="VEuPathDB" id="HostDB:ENSG00000156042"/>
<dbReference type="eggNOG" id="ENOG502QSJ2">
    <property type="taxonomic scope" value="Eukaryota"/>
</dbReference>
<dbReference type="GeneTree" id="ENSGT00390000013319"/>
<dbReference type="HOGENOM" id="CLU_009208_0_0_1"/>
<dbReference type="InParanoid" id="Q5T0N1"/>
<dbReference type="OMA" id="MSDYHMQ"/>
<dbReference type="OrthoDB" id="10262375at2759"/>
<dbReference type="PAN-GO" id="Q5T0N1">
    <property type="GO annotations" value="3 GO annotations based on evolutionary models"/>
</dbReference>
<dbReference type="PhylomeDB" id="Q5T0N1"/>
<dbReference type="TreeFam" id="TF324454"/>
<dbReference type="PathwayCommons" id="Q5T0N1"/>
<dbReference type="BioGRID-ORCS" id="118491">
    <property type="hits" value="13 hits in 1115 CRISPR screens"/>
</dbReference>
<dbReference type="ChiTaRS" id="CFAP70">
    <property type="organism name" value="human"/>
</dbReference>
<dbReference type="GenomeRNAi" id="118491"/>
<dbReference type="Pharos" id="Q5T0N1">
    <property type="development level" value="Tdark"/>
</dbReference>
<dbReference type="PRO" id="PR:Q5T0N1"/>
<dbReference type="Proteomes" id="UP000005640">
    <property type="component" value="Chromosome 10"/>
</dbReference>
<dbReference type="RNAct" id="Q5T0N1">
    <property type="molecule type" value="protein"/>
</dbReference>
<dbReference type="Bgee" id="ENSG00000156042">
    <property type="expression patterns" value="Expressed in right uterine tube and 145 other cell types or tissues"/>
</dbReference>
<dbReference type="ExpressionAtlas" id="Q5T0N1">
    <property type="expression patterns" value="baseline and differential"/>
</dbReference>
<dbReference type="GO" id="GO:0005930">
    <property type="term" value="C:axoneme"/>
    <property type="evidence" value="ECO:0000250"/>
    <property type="project" value="UniProtKB"/>
</dbReference>
<dbReference type="GO" id="GO:0036064">
    <property type="term" value="C:ciliary basal body"/>
    <property type="evidence" value="ECO:0000314"/>
    <property type="project" value="UniProtKB"/>
</dbReference>
<dbReference type="GO" id="GO:0070062">
    <property type="term" value="C:extracellular exosome"/>
    <property type="evidence" value="ECO:0007005"/>
    <property type="project" value="UniProtKB"/>
</dbReference>
<dbReference type="GO" id="GO:0031514">
    <property type="term" value="C:motile cilium"/>
    <property type="evidence" value="ECO:0000318"/>
    <property type="project" value="GO_Central"/>
</dbReference>
<dbReference type="GO" id="GO:0036157">
    <property type="term" value="C:outer dynein arm"/>
    <property type="evidence" value="ECO:0000314"/>
    <property type="project" value="UniProtKB"/>
</dbReference>
<dbReference type="GO" id="GO:0036126">
    <property type="term" value="C:sperm flagellum"/>
    <property type="evidence" value="ECO:0000314"/>
    <property type="project" value="UniProtKB"/>
</dbReference>
<dbReference type="GO" id="GO:0060271">
    <property type="term" value="P:cilium assembly"/>
    <property type="evidence" value="ECO:0000250"/>
    <property type="project" value="UniProtKB"/>
</dbReference>
<dbReference type="GO" id="GO:0003341">
    <property type="term" value="P:cilium movement"/>
    <property type="evidence" value="ECO:0000250"/>
    <property type="project" value="UniProtKB"/>
</dbReference>
<dbReference type="FunFam" id="1.25.40.10:FF:000717">
    <property type="entry name" value="Cilia- and flagella-associated protein 70"/>
    <property type="match status" value="1"/>
</dbReference>
<dbReference type="FunFam" id="1.25.40.10:FF:000461">
    <property type="entry name" value="cilia- and flagella-associated protein 70 isoform X1"/>
    <property type="match status" value="1"/>
</dbReference>
<dbReference type="FunFam" id="1.25.40.10:FF:000489">
    <property type="entry name" value="cilia- and flagella-associated protein 70 isoform X2"/>
    <property type="match status" value="1"/>
</dbReference>
<dbReference type="Gene3D" id="1.25.40.10">
    <property type="entry name" value="Tetratricopeptide repeat domain"/>
    <property type="match status" value="3"/>
</dbReference>
<dbReference type="InterPro" id="IPR052628">
    <property type="entry name" value="CFAP70"/>
</dbReference>
<dbReference type="InterPro" id="IPR011990">
    <property type="entry name" value="TPR-like_helical_dom_sf"/>
</dbReference>
<dbReference type="InterPro" id="IPR019734">
    <property type="entry name" value="TPR_rpt"/>
</dbReference>
<dbReference type="PANTHER" id="PTHR44314">
    <property type="entry name" value="CILIA- AND FLAGELLA-ASSOCIATED PROTEIN 70"/>
    <property type="match status" value="1"/>
</dbReference>
<dbReference type="PANTHER" id="PTHR44314:SF1">
    <property type="entry name" value="CILIA- AND FLAGELLA-ASSOCIATED PROTEIN 70"/>
    <property type="match status" value="1"/>
</dbReference>
<dbReference type="Pfam" id="PF13181">
    <property type="entry name" value="TPR_8"/>
    <property type="match status" value="3"/>
</dbReference>
<dbReference type="SMART" id="SM00028">
    <property type="entry name" value="TPR"/>
    <property type="match status" value="9"/>
</dbReference>
<dbReference type="SUPFAM" id="SSF48452">
    <property type="entry name" value="TPR-like"/>
    <property type="match status" value="2"/>
</dbReference>
<dbReference type="PROSITE" id="PS50005">
    <property type="entry name" value="TPR"/>
    <property type="match status" value="7"/>
</dbReference>
<dbReference type="PROSITE" id="PS50293">
    <property type="entry name" value="TPR_REGION"/>
    <property type="match status" value="2"/>
</dbReference>
<name>CFA70_HUMAN</name>
<reference key="1">
    <citation type="journal article" date="2007" name="BMC Genomics">
        <title>The full-ORF clone resource of the German cDNA consortium.</title>
        <authorList>
            <person name="Bechtel S."/>
            <person name="Rosenfelder H."/>
            <person name="Duda A."/>
            <person name="Schmidt C.P."/>
            <person name="Ernst U."/>
            <person name="Wellenreuther R."/>
            <person name="Mehrle A."/>
            <person name="Schuster C."/>
            <person name="Bahr A."/>
            <person name="Bloecker H."/>
            <person name="Heubner D."/>
            <person name="Hoerlein A."/>
            <person name="Michel G."/>
            <person name="Wedler H."/>
            <person name="Koehrer K."/>
            <person name="Ottenwaelder B."/>
            <person name="Poustka A."/>
            <person name="Wiemann S."/>
            <person name="Schupp I."/>
        </authorList>
    </citation>
    <scope>NUCLEOTIDE SEQUENCE [LARGE SCALE MRNA] (ISOFORM 3)</scope>
    <source>
        <tissue>Cervix</tissue>
    </source>
</reference>
<reference key="2">
    <citation type="journal article" date="2004" name="Nature">
        <title>The DNA sequence and comparative analysis of human chromosome 10.</title>
        <authorList>
            <person name="Deloukas P."/>
            <person name="Earthrowl M.E."/>
            <person name="Grafham D.V."/>
            <person name="Rubenfield M."/>
            <person name="French L."/>
            <person name="Steward C.A."/>
            <person name="Sims S.K."/>
            <person name="Jones M.C."/>
            <person name="Searle S."/>
            <person name="Scott C."/>
            <person name="Howe K."/>
            <person name="Hunt S.E."/>
            <person name="Andrews T.D."/>
            <person name="Gilbert J.G.R."/>
            <person name="Swarbreck D."/>
            <person name="Ashurst J.L."/>
            <person name="Taylor A."/>
            <person name="Battles J."/>
            <person name="Bird C.P."/>
            <person name="Ainscough R."/>
            <person name="Almeida J.P."/>
            <person name="Ashwell R.I.S."/>
            <person name="Ambrose K.D."/>
            <person name="Babbage A.K."/>
            <person name="Bagguley C.L."/>
            <person name="Bailey J."/>
            <person name="Banerjee R."/>
            <person name="Bates K."/>
            <person name="Beasley H."/>
            <person name="Bray-Allen S."/>
            <person name="Brown A.J."/>
            <person name="Brown J.Y."/>
            <person name="Burford D.C."/>
            <person name="Burrill W."/>
            <person name="Burton J."/>
            <person name="Cahill P."/>
            <person name="Camire D."/>
            <person name="Carter N.P."/>
            <person name="Chapman J.C."/>
            <person name="Clark S.Y."/>
            <person name="Clarke G."/>
            <person name="Clee C.M."/>
            <person name="Clegg S."/>
            <person name="Corby N."/>
            <person name="Coulson A."/>
            <person name="Dhami P."/>
            <person name="Dutta I."/>
            <person name="Dunn M."/>
            <person name="Faulkner L."/>
            <person name="Frankish A."/>
            <person name="Frankland J.A."/>
            <person name="Garner P."/>
            <person name="Garnett J."/>
            <person name="Gribble S."/>
            <person name="Griffiths C."/>
            <person name="Grocock R."/>
            <person name="Gustafson E."/>
            <person name="Hammond S."/>
            <person name="Harley J.L."/>
            <person name="Hart E."/>
            <person name="Heath P.D."/>
            <person name="Ho T.P."/>
            <person name="Hopkins B."/>
            <person name="Horne J."/>
            <person name="Howden P.J."/>
            <person name="Huckle E."/>
            <person name="Hynds C."/>
            <person name="Johnson C."/>
            <person name="Johnson D."/>
            <person name="Kana A."/>
            <person name="Kay M."/>
            <person name="Kimberley A.M."/>
            <person name="Kershaw J.K."/>
            <person name="Kokkinaki M."/>
            <person name="Laird G.K."/>
            <person name="Lawlor S."/>
            <person name="Lee H.M."/>
            <person name="Leongamornlert D.A."/>
            <person name="Laird G."/>
            <person name="Lloyd C."/>
            <person name="Lloyd D.M."/>
            <person name="Loveland J."/>
            <person name="Lovell J."/>
            <person name="McLaren S."/>
            <person name="McLay K.E."/>
            <person name="McMurray A."/>
            <person name="Mashreghi-Mohammadi M."/>
            <person name="Matthews L."/>
            <person name="Milne S."/>
            <person name="Nickerson T."/>
            <person name="Nguyen M."/>
            <person name="Overton-Larty E."/>
            <person name="Palmer S.A."/>
            <person name="Pearce A.V."/>
            <person name="Peck A.I."/>
            <person name="Pelan S."/>
            <person name="Phillimore B."/>
            <person name="Porter K."/>
            <person name="Rice C.M."/>
            <person name="Rogosin A."/>
            <person name="Ross M.T."/>
            <person name="Sarafidou T."/>
            <person name="Sehra H.K."/>
            <person name="Shownkeen R."/>
            <person name="Skuce C.D."/>
            <person name="Smith M."/>
            <person name="Standring L."/>
            <person name="Sycamore N."/>
            <person name="Tester J."/>
            <person name="Thorpe A."/>
            <person name="Torcasso W."/>
            <person name="Tracey A."/>
            <person name="Tromans A."/>
            <person name="Tsolas J."/>
            <person name="Wall M."/>
            <person name="Walsh J."/>
            <person name="Wang H."/>
            <person name="Weinstock K."/>
            <person name="West A.P."/>
            <person name="Willey D.L."/>
            <person name="Whitehead S.L."/>
            <person name="Wilming L."/>
            <person name="Wray P.W."/>
            <person name="Young L."/>
            <person name="Chen Y."/>
            <person name="Lovering R.C."/>
            <person name="Moschonas N.K."/>
            <person name="Siebert R."/>
            <person name="Fechtel K."/>
            <person name="Bentley D."/>
            <person name="Durbin R.M."/>
            <person name="Hubbard T."/>
            <person name="Doucette-Stamm L."/>
            <person name="Beck S."/>
            <person name="Smith D.R."/>
            <person name="Rogers J."/>
        </authorList>
    </citation>
    <scope>NUCLEOTIDE SEQUENCE [LARGE SCALE GENOMIC DNA]</scope>
</reference>
<reference key="3">
    <citation type="journal article" date="2004" name="Genome Res.">
        <title>The status, quality, and expansion of the NIH full-length cDNA project: the Mammalian Gene Collection (MGC).</title>
        <authorList>
            <consortium name="The MGC Project Team"/>
        </authorList>
    </citation>
    <scope>NUCLEOTIDE SEQUENCE [LARGE SCALE MRNA] (ISOFORM 1)</scope>
    <source>
        <tissue>Testis</tissue>
    </source>
</reference>
<reference key="4">
    <citation type="journal article" date="2004" name="Nat. Genet.">
        <title>Complete sequencing and characterization of 21,243 full-length human cDNAs.</title>
        <authorList>
            <person name="Ota T."/>
            <person name="Suzuki Y."/>
            <person name="Nishikawa T."/>
            <person name="Otsuki T."/>
            <person name="Sugiyama T."/>
            <person name="Irie R."/>
            <person name="Wakamatsu A."/>
            <person name="Hayashi K."/>
            <person name="Sato H."/>
            <person name="Nagai K."/>
            <person name="Kimura K."/>
            <person name="Makita H."/>
            <person name="Sekine M."/>
            <person name="Obayashi M."/>
            <person name="Nishi T."/>
            <person name="Shibahara T."/>
            <person name="Tanaka T."/>
            <person name="Ishii S."/>
            <person name="Yamamoto J."/>
            <person name="Saito K."/>
            <person name="Kawai Y."/>
            <person name="Isono Y."/>
            <person name="Nakamura Y."/>
            <person name="Nagahari K."/>
            <person name="Murakami K."/>
            <person name="Yasuda T."/>
            <person name="Iwayanagi T."/>
            <person name="Wagatsuma M."/>
            <person name="Shiratori A."/>
            <person name="Sudo H."/>
            <person name="Hosoiri T."/>
            <person name="Kaku Y."/>
            <person name="Kodaira H."/>
            <person name="Kondo H."/>
            <person name="Sugawara M."/>
            <person name="Takahashi M."/>
            <person name="Kanda K."/>
            <person name="Yokoi T."/>
            <person name="Furuya T."/>
            <person name="Kikkawa E."/>
            <person name="Omura Y."/>
            <person name="Abe K."/>
            <person name="Kamihara K."/>
            <person name="Katsuta N."/>
            <person name="Sato K."/>
            <person name="Tanikawa M."/>
            <person name="Yamazaki M."/>
            <person name="Ninomiya K."/>
            <person name="Ishibashi T."/>
            <person name="Yamashita H."/>
            <person name="Murakawa K."/>
            <person name="Fujimori K."/>
            <person name="Tanai H."/>
            <person name="Kimata M."/>
            <person name="Watanabe M."/>
            <person name="Hiraoka S."/>
            <person name="Chiba Y."/>
            <person name="Ishida S."/>
            <person name="Ono Y."/>
            <person name="Takiguchi S."/>
            <person name="Watanabe S."/>
            <person name="Yosida M."/>
            <person name="Hotuta T."/>
            <person name="Kusano J."/>
            <person name="Kanehori K."/>
            <person name="Takahashi-Fujii A."/>
            <person name="Hara H."/>
            <person name="Tanase T.-O."/>
            <person name="Nomura Y."/>
            <person name="Togiya S."/>
            <person name="Komai F."/>
            <person name="Hara R."/>
            <person name="Takeuchi K."/>
            <person name="Arita M."/>
            <person name="Imose N."/>
            <person name="Musashino K."/>
            <person name="Yuuki H."/>
            <person name="Oshima A."/>
            <person name="Sasaki N."/>
            <person name="Aotsuka S."/>
            <person name="Yoshikawa Y."/>
            <person name="Matsunawa H."/>
            <person name="Ichihara T."/>
            <person name="Shiohata N."/>
            <person name="Sano S."/>
            <person name="Moriya S."/>
            <person name="Momiyama H."/>
            <person name="Satoh N."/>
            <person name="Takami S."/>
            <person name="Terashima Y."/>
            <person name="Suzuki O."/>
            <person name="Nakagawa S."/>
            <person name="Senoh A."/>
            <person name="Mizoguchi H."/>
            <person name="Goto Y."/>
            <person name="Shimizu F."/>
            <person name="Wakebe H."/>
            <person name="Hishigaki H."/>
            <person name="Watanabe T."/>
            <person name="Sugiyama A."/>
            <person name="Takemoto M."/>
            <person name="Kawakami B."/>
            <person name="Yamazaki M."/>
            <person name="Watanabe K."/>
            <person name="Kumagai A."/>
            <person name="Itakura S."/>
            <person name="Fukuzumi Y."/>
            <person name="Fujimori Y."/>
            <person name="Komiyama M."/>
            <person name="Tashiro H."/>
            <person name="Tanigami A."/>
            <person name="Fujiwara T."/>
            <person name="Ono T."/>
            <person name="Yamada K."/>
            <person name="Fujii Y."/>
            <person name="Ozaki K."/>
            <person name="Hirao M."/>
            <person name="Ohmori Y."/>
            <person name="Kawabata A."/>
            <person name="Hikiji T."/>
            <person name="Kobatake N."/>
            <person name="Inagaki H."/>
            <person name="Ikema Y."/>
            <person name="Okamoto S."/>
            <person name="Okitani R."/>
            <person name="Kawakami T."/>
            <person name="Noguchi S."/>
            <person name="Itoh T."/>
            <person name="Shigeta K."/>
            <person name="Senba T."/>
            <person name="Matsumura K."/>
            <person name="Nakajima Y."/>
            <person name="Mizuno T."/>
            <person name="Morinaga M."/>
            <person name="Sasaki M."/>
            <person name="Togashi T."/>
            <person name="Oyama M."/>
            <person name="Hata H."/>
            <person name="Watanabe M."/>
            <person name="Komatsu T."/>
            <person name="Mizushima-Sugano J."/>
            <person name="Satoh T."/>
            <person name="Shirai Y."/>
            <person name="Takahashi Y."/>
            <person name="Nakagawa K."/>
            <person name="Okumura K."/>
            <person name="Nagase T."/>
            <person name="Nomura N."/>
            <person name="Kikuchi H."/>
            <person name="Masuho Y."/>
            <person name="Yamashita R."/>
            <person name="Nakai K."/>
            <person name="Yada T."/>
            <person name="Nakamura Y."/>
            <person name="Ohara O."/>
            <person name="Isogai T."/>
            <person name="Sugano S."/>
        </authorList>
    </citation>
    <scope>NUCLEOTIDE SEQUENCE [LARGE SCALE MRNA] OF 594-1121 (ISOFORM 2)</scope>
    <source>
        <tissue>Testis</tissue>
    </source>
</reference>
<reference key="5">
    <citation type="submission" date="2001-10" db="EMBL/GenBank/DDBJ databases">
        <authorList>
            <person name="Guo J.H."/>
            <person name="Yu L."/>
        </authorList>
    </citation>
    <scope>NUCLEOTIDE SEQUENCE [LARGE SCALE MRNA] (ISOFORMS 4 AND 5)</scope>
</reference>
<reference key="6">
    <citation type="journal article" date="2019" name="Hum. Reprod.">
        <title>CFAP70 mutations lead to male infertility due to severe astheno-teratozoospermia. A case report.</title>
        <authorList>
            <person name="Beurois J."/>
            <person name="Martinez G."/>
            <person name="Cazin C."/>
            <person name="Kherraf Z.E."/>
            <person name="Amiri-Yekta A."/>
            <person name="Thierry-Mieg N."/>
            <person name="Bidart M."/>
            <person name="Petre G."/>
            <person name="Satre V."/>
            <person name="Brouillet S."/>
            <person name="Toure A."/>
            <person name="Arnoult C."/>
            <person name="Ray P.F."/>
            <person name="Coutton C."/>
        </authorList>
    </citation>
    <scope>TISSUE SPECIFICITY</scope>
    <scope>SUBCELLULAR LOCATION</scope>
    <scope>VARIANT SPGF41 ILE-60</scope>
</reference>
<reference key="7">
    <citation type="journal article" date="2023" name="Elife">
        <title>Novel axonemal protein ZMYND12 interacts with TTC29 and DNAH1, and is required for male fertility and flagellum function.</title>
        <authorList>
            <person name="Dacheux D."/>
            <person name="Martinez G."/>
            <person name="Broster Reix C.E."/>
            <person name="Beurois J."/>
            <person name="Lores P."/>
            <person name="Tounkara M."/>
            <person name="Dupuy J.W."/>
            <person name="Robinson D.R."/>
            <person name="Loeuillet C."/>
            <person name="Lambert E."/>
            <person name="Wehbe Z."/>
            <person name="Escoffier J."/>
            <person name="Amiri-Yekta A."/>
            <person name="Daneshipour A."/>
            <person name="Hosseini S.H."/>
            <person name="Zouari R."/>
            <person name="Mustapha S.F.B."/>
            <person name="Halouani L."/>
            <person name="Jiang X."/>
            <person name="Shen Y."/>
            <person name="Liu C."/>
            <person name="Thierry-Mieg N."/>
            <person name="Septier A."/>
            <person name="Bidart M."/>
            <person name="Satre V."/>
            <person name="Cazin C."/>
            <person name="Kherraf Z.E."/>
            <person name="Arnoult C."/>
            <person name="Ray P.F."/>
            <person name="Toure A."/>
            <person name="Bonhivers M."/>
            <person name="Coutton C."/>
        </authorList>
    </citation>
    <scope>SUBCELLULAR LOCATION</scope>
</reference>